<organism>
    <name type="scientific">Schizosaccharomyces pombe (strain 972 / ATCC 24843)</name>
    <name type="common">Fission yeast</name>
    <dbReference type="NCBI Taxonomy" id="284812"/>
    <lineage>
        <taxon>Eukaryota</taxon>
        <taxon>Fungi</taxon>
        <taxon>Dikarya</taxon>
        <taxon>Ascomycota</taxon>
        <taxon>Taphrinomycotina</taxon>
        <taxon>Schizosaccharomycetes</taxon>
        <taxon>Schizosaccharomycetales</taxon>
        <taxon>Schizosaccharomycetaceae</taxon>
        <taxon>Schizosaccharomyces</taxon>
    </lineage>
</organism>
<name>MUG70_SCHPO</name>
<comment type="function">
    <text evidence="5">Has a role in meiosis.</text>
</comment>
<comment type="subcellular location">
    <subcellularLocation>
        <location>Cytoplasm</location>
    </subcellularLocation>
    <subcellularLocation>
        <location>Nucleus membrane</location>
        <topology>Multi-pass membrane protein</topology>
    </subcellularLocation>
</comment>
<reference key="1">
    <citation type="journal article" date="2002" name="Nature">
        <title>The genome sequence of Schizosaccharomyces pombe.</title>
        <authorList>
            <person name="Wood V."/>
            <person name="Gwilliam R."/>
            <person name="Rajandream M.A."/>
            <person name="Lyne M.H."/>
            <person name="Lyne R."/>
            <person name="Stewart A."/>
            <person name="Sgouros J.G."/>
            <person name="Peat N."/>
            <person name="Hayles J."/>
            <person name="Baker S.G."/>
            <person name="Basham D."/>
            <person name="Bowman S."/>
            <person name="Brooks K."/>
            <person name="Brown D."/>
            <person name="Brown S."/>
            <person name="Chillingworth T."/>
            <person name="Churcher C.M."/>
            <person name="Collins M."/>
            <person name="Connor R."/>
            <person name="Cronin A."/>
            <person name="Davis P."/>
            <person name="Feltwell T."/>
            <person name="Fraser A."/>
            <person name="Gentles S."/>
            <person name="Goble A."/>
            <person name="Hamlin N."/>
            <person name="Harris D.E."/>
            <person name="Hidalgo J."/>
            <person name="Hodgson G."/>
            <person name="Holroyd S."/>
            <person name="Hornsby T."/>
            <person name="Howarth S."/>
            <person name="Huckle E.J."/>
            <person name="Hunt S."/>
            <person name="Jagels K."/>
            <person name="James K.D."/>
            <person name="Jones L."/>
            <person name="Jones M."/>
            <person name="Leather S."/>
            <person name="McDonald S."/>
            <person name="McLean J."/>
            <person name="Mooney P."/>
            <person name="Moule S."/>
            <person name="Mungall K.L."/>
            <person name="Murphy L.D."/>
            <person name="Niblett D."/>
            <person name="Odell C."/>
            <person name="Oliver K."/>
            <person name="O'Neil S."/>
            <person name="Pearson D."/>
            <person name="Quail M.A."/>
            <person name="Rabbinowitsch E."/>
            <person name="Rutherford K.M."/>
            <person name="Rutter S."/>
            <person name="Saunders D."/>
            <person name="Seeger K."/>
            <person name="Sharp S."/>
            <person name="Skelton J."/>
            <person name="Simmonds M.N."/>
            <person name="Squares R."/>
            <person name="Squares S."/>
            <person name="Stevens K."/>
            <person name="Taylor K."/>
            <person name="Taylor R.G."/>
            <person name="Tivey A."/>
            <person name="Walsh S.V."/>
            <person name="Warren T."/>
            <person name="Whitehead S."/>
            <person name="Woodward J.R."/>
            <person name="Volckaert G."/>
            <person name="Aert R."/>
            <person name="Robben J."/>
            <person name="Grymonprez B."/>
            <person name="Weltjens I."/>
            <person name="Vanstreels E."/>
            <person name="Rieger M."/>
            <person name="Schaefer M."/>
            <person name="Mueller-Auer S."/>
            <person name="Gabel C."/>
            <person name="Fuchs M."/>
            <person name="Duesterhoeft A."/>
            <person name="Fritzc C."/>
            <person name="Holzer E."/>
            <person name="Moestl D."/>
            <person name="Hilbert H."/>
            <person name="Borzym K."/>
            <person name="Langer I."/>
            <person name="Beck A."/>
            <person name="Lehrach H."/>
            <person name="Reinhardt R."/>
            <person name="Pohl T.M."/>
            <person name="Eger P."/>
            <person name="Zimmermann W."/>
            <person name="Wedler H."/>
            <person name="Wambutt R."/>
            <person name="Purnelle B."/>
            <person name="Goffeau A."/>
            <person name="Cadieu E."/>
            <person name="Dreano S."/>
            <person name="Gloux S."/>
            <person name="Lelaure V."/>
            <person name="Mottier S."/>
            <person name="Galibert F."/>
            <person name="Aves S.J."/>
            <person name="Xiang Z."/>
            <person name="Hunt C."/>
            <person name="Moore K."/>
            <person name="Hurst S.M."/>
            <person name="Lucas M."/>
            <person name="Rochet M."/>
            <person name="Gaillardin C."/>
            <person name="Tallada V.A."/>
            <person name="Garzon A."/>
            <person name="Thode G."/>
            <person name="Daga R.R."/>
            <person name="Cruzado L."/>
            <person name="Jimenez J."/>
            <person name="Sanchez M."/>
            <person name="del Rey F."/>
            <person name="Benito J."/>
            <person name="Dominguez A."/>
            <person name="Revuelta J.L."/>
            <person name="Moreno S."/>
            <person name="Armstrong J."/>
            <person name="Forsburg S.L."/>
            <person name="Cerutti L."/>
            <person name="Lowe T."/>
            <person name="McCombie W.R."/>
            <person name="Paulsen I."/>
            <person name="Potashkin J."/>
            <person name="Shpakovski G.V."/>
            <person name="Ussery D."/>
            <person name="Barrell B.G."/>
            <person name="Nurse P."/>
        </authorList>
    </citation>
    <scope>NUCLEOTIDE SEQUENCE [LARGE SCALE GENOMIC DNA]</scope>
    <source>
        <strain>972 / ATCC 24843</strain>
    </source>
</reference>
<reference key="2">
    <citation type="journal article" date="2000" name="Genes Cells">
        <title>Large-scale screening of intracellular protein localization in living fission yeast cells by the use of a GFP-fusion genomic DNA library.</title>
        <authorList>
            <person name="Ding D.-Q."/>
            <person name="Tomita Y."/>
            <person name="Yamamoto A."/>
            <person name="Chikashige Y."/>
            <person name="Haraguchi T."/>
            <person name="Hiraoka Y."/>
        </authorList>
    </citation>
    <scope>NUCLEOTIDE SEQUENCE [LARGE SCALE GENOMIC DNA] OF 379-536</scope>
    <scope>SUBCELLULAR LOCATION</scope>
    <source>
        <strain>ATCC 38364 / 968</strain>
    </source>
</reference>
<reference key="3">
    <citation type="journal article" date="2005" name="Curr. Biol.">
        <title>A large-scale screen in S. pombe identifies seven novel genes required for critical meiotic events.</title>
        <authorList>
            <person name="Martin-Castellanos C."/>
            <person name="Blanco M."/>
            <person name="Rozalen A.E."/>
            <person name="Perez-Hidalgo L."/>
            <person name="Garcia A.I."/>
            <person name="Conde F."/>
            <person name="Mata J."/>
            <person name="Ellermeier C."/>
            <person name="Davis L."/>
            <person name="San-Segundo P."/>
            <person name="Smith G.R."/>
            <person name="Moreno S."/>
        </authorList>
    </citation>
    <scope>FUNCTION IN MEIOSIS</scope>
</reference>
<reference key="4">
    <citation type="journal article" date="2006" name="Nat. Biotechnol.">
        <title>ORFeome cloning and global analysis of protein localization in the fission yeast Schizosaccharomyces pombe.</title>
        <authorList>
            <person name="Matsuyama A."/>
            <person name="Arai R."/>
            <person name="Yashiroda Y."/>
            <person name="Shirai A."/>
            <person name="Kamata A."/>
            <person name="Sekido S."/>
            <person name="Kobayashi Y."/>
            <person name="Hashimoto A."/>
            <person name="Hamamoto M."/>
            <person name="Hiraoka Y."/>
            <person name="Horinouchi S."/>
            <person name="Yoshida M."/>
        </authorList>
    </citation>
    <scope>SUBCELLULAR LOCATION [LARGE SCALE ANALYSIS]</scope>
</reference>
<sequence>MTVGTLSVVSSTASDTASHVSDTRKRQYQRDEALRKKIISELGKKSGNFESPVRKIRRNGEPGTVDSAALDPALTVHMQSLVTETAQLMAAKRQNCVLVVDDDEQLAGIVTATDIATRCVGAGLNARQTLIADIMSTSPLCITSDTRFDDALLLMIEHKFRHLPVVSDGGPDGSAGDEGDVIGIINMRACLREPLNRIARQQEAAQKLVEALEGAQEEIENKSVSGNTNSSSVSGNHAAEFLEYVESLKKKASGLEIMSLIDSSEEPFLVGTRTTVAEATESMARSGVSAVLVMDNGAVSGVFTAHDVVLRVLAAGLDPYRSSVIRVMTPHPDCALASLRVSTALERMIEGKFSNLPVVDESDAIIGMLSLFHLATAIEQTPEEEEEVFDQAENDAGIEPSNGFEDQQQQLLGNSNEVVENYDVNPPLPLNPLPSNTQQSESTYEYSARQLPKPPVQAWQNENLSSNNKPQEYVGVENDYNFSNNPPTAMSEQSFHPSVSQKPMDTPENGSNSFAASPYLQPYNSASQLAPSYVGSLPQYHGNPSFVEQALQDLVQPTDSASQIFPLNPQSPSQFTIKYRSIAGRVHRLRLDGINSVSDLRTAVEEREKEQLVTLTYIDDEGDVVELVSDSDLREAILLARRRGLPRLEVRGVAAFTNHLESSHPPISTVDSSIGSASVVEKGVANSIVDIHQPTAKADKGNSKKPIYIGIVSSSIVILAVSMWYLRRKR</sequence>
<proteinExistence type="evidence at protein level"/>
<evidence type="ECO:0000255" key="1"/>
<evidence type="ECO:0000255" key="2">
    <source>
        <dbReference type="PROSITE-ProRule" id="PRU00703"/>
    </source>
</evidence>
<evidence type="ECO:0000255" key="3">
    <source>
        <dbReference type="PROSITE-ProRule" id="PRU01081"/>
    </source>
</evidence>
<evidence type="ECO:0000256" key="4">
    <source>
        <dbReference type="SAM" id="MobiDB-lite"/>
    </source>
</evidence>
<evidence type="ECO:0000269" key="5">
    <source>
    </source>
</evidence>
<dbReference type="EMBL" id="CU329670">
    <property type="protein sequence ID" value="CAB11262.1"/>
    <property type="molecule type" value="Genomic_DNA"/>
</dbReference>
<dbReference type="EMBL" id="AB027787">
    <property type="protein sequence ID" value="BAA87091.1"/>
    <property type="molecule type" value="Genomic_DNA"/>
</dbReference>
<dbReference type="PIR" id="T38346">
    <property type="entry name" value="T38346"/>
</dbReference>
<dbReference type="RefSeq" id="NP_594030.1">
    <property type="nucleotide sequence ID" value="NM_001019455.2"/>
</dbReference>
<dbReference type="SMR" id="O13965"/>
<dbReference type="BioGRID" id="278185">
    <property type="interactions" value="7"/>
</dbReference>
<dbReference type="FunCoup" id="O13965">
    <property type="interactions" value="11"/>
</dbReference>
<dbReference type="STRING" id="284812.O13965"/>
<dbReference type="iPTMnet" id="O13965"/>
<dbReference type="PaxDb" id="4896-SPAC24C9.05c.1"/>
<dbReference type="EnsemblFungi" id="SPAC24C9.05c.1">
    <property type="protein sequence ID" value="SPAC24C9.05c.1:pep"/>
    <property type="gene ID" value="SPAC24C9.05c"/>
</dbReference>
<dbReference type="GeneID" id="2541689"/>
<dbReference type="KEGG" id="spo:2541689"/>
<dbReference type="PomBase" id="SPAC24C9.05c">
    <property type="gene designation" value="mug70"/>
</dbReference>
<dbReference type="VEuPathDB" id="FungiDB:SPAC24C9.05c"/>
<dbReference type="eggNOG" id="ENOG502QVK2">
    <property type="taxonomic scope" value="Eukaryota"/>
</dbReference>
<dbReference type="HOGENOM" id="CLU_009026_1_1_1"/>
<dbReference type="InParanoid" id="O13965"/>
<dbReference type="OMA" id="IGIINMR"/>
<dbReference type="PhylomeDB" id="O13965"/>
<dbReference type="PRO" id="PR:O13965"/>
<dbReference type="Proteomes" id="UP000002485">
    <property type="component" value="Chromosome I"/>
</dbReference>
<dbReference type="GO" id="GO:0005737">
    <property type="term" value="C:cytoplasm"/>
    <property type="evidence" value="ECO:0007005"/>
    <property type="project" value="PomBase"/>
</dbReference>
<dbReference type="GO" id="GO:0005829">
    <property type="term" value="C:cytosol"/>
    <property type="evidence" value="ECO:0007005"/>
    <property type="project" value="PomBase"/>
</dbReference>
<dbReference type="GO" id="GO:0031965">
    <property type="term" value="C:nuclear membrane"/>
    <property type="evidence" value="ECO:0007669"/>
    <property type="project" value="UniProtKB-SubCell"/>
</dbReference>
<dbReference type="GO" id="GO:0005634">
    <property type="term" value="C:nucleus"/>
    <property type="evidence" value="ECO:0007005"/>
    <property type="project" value="PomBase"/>
</dbReference>
<dbReference type="GO" id="GO:0051321">
    <property type="term" value="P:meiotic cell cycle"/>
    <property type="evidence" value="ECO:0007669"/>
    <property type="project" value="UniProtKB-KW"/>
</dbReference>
<dbReference type="CDD" id="cd17781">
    <property type="entry name" value="CBS_pair_MUG70_1"/>
    <property type="match status" value="1"/>
</dbReference>
<dbReference type="CDD" id="cd17782">
    <property type="entry name" value="CBS_pair_MUG70_2"/>
    <property type="match status" value="1"/>
</dbReference>
<dbReference type="CDD" id="cd06409">
    <property type="entry name" value="PB1_MUG70"/>
    <property type="match status" value="1"/>
</dbReference>
<dbReference type="FunFam" id="3.10.580.10:FF:000143">
    <property type="entry name" value="Meiotically up-regulated gene 70 protein"/>
    <property type="match status" value="1"/>
</dbReference>
<dbReference type="Gene3D" id="3.10.580.10">
    <property type="entry name" value="CBS-domain"/>
    <property type="match status" value="2"/>
</dbReference>
<dbReference type="Gene3D" id="3.10.20.90">
    <property type="entry name" value="Phosphatidylinositol 3-kinase Catalytic Subunit, Chain A, domain 1"/>
    <property type="match status" value="1"/>
</dbReference>
<dbReference type="InterPro" id="IPR000644">
    <property type="entry name" value="CBS_dom"/>
</dbReference>
<dbReference type="InterPro" id="IPR046342">
    <property type="entry name" value="CBS_dom_sf"/>
</dbReference>
<dbReference type="InterPro" id="IPR051462">
    <property type="entry name" value="CBS_domain-containing"/>
</dbReference>
<dbReference type="InterPro" id="IPR053793">
    <property type="entry name" value="PB1-like"/>
</dbReference>
<dbReference type="InterPro" id="IPR000270">
    <property type="entry name" value="PB1_dom"/>
</dbReference>
<dbReference type="PANTHER" id="PTHR48108">
    <property type="entry name" value="CBS DOMAIN-CONTAINING PROTEIN CBSX2, CHLOROPLASTIC"/>
    <property type="match status" value="1"/>
</dbReference>
<dbReference type="PANTHER" id="PTHR48108:SF26">
    <property type="entry name" value="CBS DOMAIN-CONTAINING PROTEIN DDB_G0289609"/>
    <property type="match status" value="1"/>
</dbReference>
<dbReference type="Pfam" id="PF00571">
    <property type="entry name" value="CBS"/>
    <property type="match status" value="4"/>
</dbReference>
<dbReference type="Pfam" id="PF00564">
    <property type="entry name" value="PB1"/>
    <property type="match status" value="1"/>
</dbReference>
<dbReference type="SMART" id="SM00116">
    <property type="entry name" value="CBS"/>
    <property type="match status" value="4"/>
</dbReference>
<dbReference type="SMART" id="SM00666">
    <property type="entry name" value="PB1"/>
    <property type="match status" value="1"/>
</dbReference>
<dbReference type="SUPFAM" id="SSF54277">
    <property type="entry name" value="CAD &amp; PB1 domains"/>
    <property type="match status" value="1"/>
</dbReference>
<dbReference type="SUPFAM" id="SSF54631">
    <property type="entry name" value="CBS-domain pair"/>
    <property type="match status" value="2"/>
</dbReference>
<dbReference type="PROSITE" id="PS51371">
    <property type="entry name" value="CBS"/>
    <property type="match status" value="4"/>
</dbReference>
<dbReference type="PROSITE" id="PS51745">
    <property type="entry name" value="PB1"/>
    <property type="match status" value="1"/>
</dbReference>
<protein>
    <recommendedName>
        <fullName>Meiotically up-regulated gene 70 protein</fullName>
    </recommendedName>
</protein>
<gene>
    <name type="primary">mug70</name>
    <name type="ORF">SPAC24C9.05c</name>
</gene>
<accession>O13965</accession>
<accession>Q9USF6</accession>
<feature type="chain" id="PRO_0000116696" description="Meiotically up-regulated gene 70 protein">
    <location>
        <begin position="1"/>
        <end position="730"/>
    </location>
</feature>
<feature type="transmembrane region" description="Helical" evidence="1">
    <location>
        <begin position="290"/>
        <end position="310"/>
    </location>
</feature>
<feature type="transmembrane region" description="Helical" evidence="1">
    <location>
        <begin position="358"/>
        <end position="378"/>
    </location>
</feature>
<feature type="transmembrane region" description="Helical" evidence="1">
    <location>
        <begin position="706"/>
        <end position="726"/>
    </location>
</feature>
<feature type="domain" description="CBS 1" evidence="2">
    <location>
        <begin position="69"/>
        <end position="127"/>
    </location>
</feature>
<feature type="domain" description="CBS 2" evidence="2">
    <location>
        <begin position="135"/>
        <end position="200"/>
    </location>
</feature>
<feature type="domain" description="CBS 3" evidence="2">
    <location>
        <begin position="263"/>
        <end position="319"/>
    </location>
</feature>
<feature type="domain" description="CBS 4" evidence="2">
    <location>
        <begin position="328"/>
        <end position="385"/>
    </location>
</feature>
<feature type="domain" description="PB1" evidence="3">
    <location>
        <begin position="572"/>
        <end position="649"/>
    </location>
</feature>
<feature type="region of interest" description="Disordered" evidence="4">
    <location>
        <begin position="1"/>
        <end position="27"/>
    </location>
</feature>
<feature type="region of interest" description="Disordered" evidence="4">
    <location>
        <begin position="420"/>
        <end position="517"/>
    </location>
</feature>
<feature type="compositionally biased region" description="Low complexity" evidence="4">
    <location>
        <begin position="7"/>
        <end position="20"/>
    </location>
</feature>
<feature type="compositionally biased region" description="Polar residues" evidence="4">
    <location>
        <begin position="458"/>
        <end position="470"/>
    </location>
</feature>
<feature type="compositionally biased region" description="Polar residues" evidence="4">
    <location>
        <begin position="480"/>
        <end position="515"/>
    </location>
</feature>
<keyword id="KW-0963">Cytoplasm</keyword>
<keyword id="KW-0469">Meiosis</keyword>
<keyword id="KW-0472">Membrane</keyword>
<keyword id="KW-0539">Nucleus</keyword>
<keyword id="KW-1185">Reference proteome</keyword>
<keyword id="KW-0677">Repeat</keyword>
<keyword id="KW-0812">Transmembrane</keyword>
<keyword id="KW-1133">Transmembrane helix</keyword>